<dbReference type="EC" id="2.1.1.-"/>
<dbReference type="EMBL" id="X60821">
    <property type="status" value="NOT_ANNOTATED_CDS"/>
    <property type="molecule type" value="Genomic_DNA"/>
</dbReference>
<dbReference type="SMR" id="P37006"/>
<dbReference type="STRING" id="273526.SMDB11_4763"/>
<dbReference type="GO" id="GO:0005829">
    <property type="term" value="C:cytosol"/>
    <property type="evidence" value="ECO:0007669"/>
    <property type="project" value="TreeGrafter"/>
</dbReference>
<dbReference type="GO" id="GO:0003723">
    <property type="term" value="F:RNA binding"/>
    <property type="evidence" value="ECO:0007669"/>
    <property type="project" value="InterPro"/>
</dbReference>
<dbReference type="GO" id="GO:0008173">
    <property type="term" value="F:RNA methyltransferase activity"/>
    <property type="evidence" value="ECO:0007669"/>
    <property type="project" value="InterPro"/>
</dbReference>
<dbReference type="GO" id="GO:0002128">
    <property type="term" value="P:tRNA nucleoside ribose methylation"/>
    <property type="evidence" value="ECO:0007669"/>
    <property type="project" value="TreeGrafter"/>
</dbReference>
<dbReference type="CDD" id="cd18093">
    <property type="entry name" value="SpoU-like_TrmJ"/>
    <property type="match status" value="1"/>
</dbReference>
<dbReference type="Gene3D" id="3.40.1280.10">
    <property type="match status" value="1"/>
</dbReference>
<dbReference type="InterPro" id="IPR029028">
    <property type="entry name" value="Alpha/beta_knot_MTases"/>
</dbReference>
<dbReference type="InterPro" id="IPR004384">
    <property type="entry name" value="RNA_MeTrfase_TrmJ/LasT"/>
</dbReference>
<dbReference type="InterPro" id="IPR001537">
    <property type="entry name" value="SpoU_MeTrfase"/>
</dbReference>
<dbReference type="InterPro" id="IPR029026">
    <property type="entry name" value="tRNA_m1G_MTases_N"/>
</dbReference>
<dbReference type="NCBIfam" id="NF007752">
    <property type="entry name" value="PRK10433.1"/>
    <property type="match status" value="1"/>
</dbReference>
<dbReference type="NCBIfam" id="TIGR00050">
    <property type="entry name" value="rRNA_methyl_1"/>
    <property type="match status" value="1"/>
</dbReference>
<dbReference type="PANTHER" id="PTHR42786:SF1">
    <property type="entry name" value="TRNA (CYTIDINE_URIDINE-2'-O-)-METHYLTRANSFERASE TRMJ"/>
    <property type="match status" value="1"/>
</dbReference>
<dbReference type="PANTHER" id="PTHR42786">
    <property type="entry name" value="TRNA/RRNA METHYLTRANSFERASE"/>
    <property type="match status" value="1"/>
</dbReference>
<dbReference type="Pfam" id="PF00588">
    <property type="entry name" value="SpoU_methylase"/>
    <property type="match status" value="1"/>
</dbReference>
<dbReference type="PIRSF" id="PIRSF004808">
    <property type="entry name" value="LasT"/>
    <property type="match status" value="1"/>
</dbReference>
<dbReference type="SUPFAM" id="SSF75217">
    <property type="entry name" value="alpha/beta knot"/>
    <property type="match status" value="1"/>
</dbReference>
<name>LAST_SERMA</name>
<evidence type="ECO:0000250" key="1">
    <source>
        <dbReference type="UniProtKB" id="P0AE01"/>
    </source>
</evidence>
<evidence type="ECO:0000305" key="2"/>
<accession>P37006</accession>
<organism>
    <name type="scientific">Serratia marcescens</name>
    <dbReference type="NCBI Taxonomy" id="615"/>
    <lineage>
        <taxon>Bacteria</taxon>
        <taxon>Pseudomonadati</taxon>
        <taxon>Pseudomonadota</taxon>
        <taxon>Gammaproteobacteria</taxon>
        <taxon>Enterobacterales</taxon>
        <taxon>Yersiniaceae</taxon>
        <taxon>Serratia</taxon>
    </lineage>
</organism>
<feature type="chain" id="PRO_0000159776" description="Uncharacterized tRNA/rRNA methyltransferase LasT">
    <location>
        <begin position="1" status="less than"/>
        <end position="196"/>
    </location>
</feature>
<feature type="binding site" evidence="1">
    <location>
        <begin position="44"/>
        <end position="46"/>
    </location>
    <ligand>
        <name>S-adenosyl-L-methionine</name>
        <dbReference type="ChEBI" id="CHEBI:59789"/>
    </ligand>
</feature>
<feature type="binding site" evidence="1">
    <location>
        <position position="80"/>
    </location>
    <ligand>
        <name>S-adenosyl-L-methionine</name>
        <dbReference type="ChEBI" id="CHEBI:59789"/>
    </ligand>
</feature>
<feature type="binding site" evidence="1">
    <location>
        <position position="100"/>
    </location>
    <ligand>
        <name>S-adenosyl-L-methionine</name>
        <dbReference type="ChEBI" id="CHEBI:59789"/>
    </ligand>
</feature>
<feature type="binding site" evidence="1">
    <location>
        <begin position="107"/>
        <end position="109"/>
    </location>
    <ligand>
        <name>S-adenosyl-L-methionine</name>
        <dbReference type="ChEBI" id="CHEBI:59789"/>
    </ligand>
</feature>
<feature type="non-terminal residue">
    <location>
        <position position="1"/>
    </location>
</feature>
<sequence length="196" mass="21551">VDSEAHLQPAARWVAHGAGEILDGVQTFATLEQALADVDFTVATTARSRARFHYYCTPPELLEQLSERKQWVGQAALVFGREDSGLTNEELALADLLTGVPMQADYPSLNLGQAVMVYCYQLASLMGVNAAPQEAAAPEGQLRALRHRADALLDALEVGDDQKLRDWLHQRLGALPQRDTAMLHTLLHDIEKKLAK</sequence>
<keyword id="KW-0489">Methyltransferase</keyword>
<keyword id="KW-0949">S-adenosyl-L-methionine</keyword>
<keyword id="KW-0808">Transferase</keyword>
<gene>
    <name type="primary">lasT</name>
</gene>
<comment type="similarity">
    <text evidence="2">Belongs to the class IV-like SAM-binding methyltransferase superfamily. RNA methyltransferase TrmH family.</text>
</comment>
<protein>
    <recommendedName>
        <fullName evidence="2">Uncharacterized tRNA/rRNA methyltransferase LasT</fullName>
        <ecNumber>2.1.1.-</ecNumber>
    </recommendedName>
</protein>
<reference key="1">
    <citation type="journal article" date="1993" name="J. Bacteriol.">
        <title>Nucleotide sequence of the Serratia marcescens threonine operon and analysis of the threonine operon mutations which alter feedback inhibition of both aspartokinase I and homoserine dehydrogenase I.</title>
        <authorList>
            <person name="Omori K."/>
            <person name="Suzuki S."/>
            <person name="Komatsubara S."/>
        </authorList>
    </citation>
    <scope>NUCLEOTIDE SEQUENCE [GENOMIC DNA]</scope>
    <source>
        <strain>Sr41</strain>
    </source>
</reference>
<reference key="2">
    <citation type="journal article" date="1993" name="Nucleic Acids Res.">
        <title>SpoU protein of Escherichia coli belongs to a new family of putative rRNA methylases.</title>
        <authorList>
            <person name="Koonin E.V."/>
            <person name="Rudd K.E."/>
        </authorList>
    </citation>
    <scope>IDENTIFICATION</scope>
</reference>
<proteinExistence type="inferred from homology"/>